<gene>
    <name evidence="1" type="primary">astB</name>
    <name type="ordered locus">ACICU_03331</name>
</gene>
<accession>B2HZS3</accession>
<protein>
    <recommendedName>
        <fullName evidence="1">N-succinylarginine dihydrolase</fullName>
        <ecNumber evidence="1">3.5.3.23</ecNumber>
    </recommendedName>
</protein>
<feature type="chain" id="PRO_1000137997" description="N-succinylarginine dihydrolase">
    <location>
        <begin position="1"/>
        <end position="447"/>
    </location>
</feature>
<feature type="active site" evidence="1">
    <location>
        <position position="174"/>
    </location>
</feature>
<feature type="active site" evidence="1">
    <location>
        <position position="250"/>
    </location>
</feature>
<feature type="active site" description="Nucleophile" evidence="1">
    <location>
        <position position="371"/>
    </location>
</feature>
<feature type="binding site" evidence="1">
    <location>
        <begin position="19"/>
        <end position="28"/>
    </location>
    <ligand>
        <name>substrate</name>
    </ligand>
</feature>
<feature type="binding site" evidence="1">
    <location>
        <position position="110"/>
    </location>
    <ligand>
        <name>substrate</name>
    </ligand>
</feature>
<feature type="binding site" evidence="1">
    <location>
        <begin position="137"/>
        <end position="138"/>
    </location>
    <ligand>
        <name>substrate</name>
    </ligand>
</feature>
<feature type="binding site" evidence="1">
    <location>
        <position position="214"/>
    </location>
    <ligand>
        <name>substrate</name>
    </ligand>
</feature>
<feature type="binding site" evidence="1">
    <location>
        <position position="252"/>
    </location>
    <ligand>
        <name>substrate</name>
    </ligand>
</feature>
<feature type="binding site" evidence="1">
    <location>
        <position position="365"/>
    </location>
    <ligand>
        <name>substrate</name>
    </ligand>
</feature>
<comment type="function">
    <text evidence="1">Catalyzes the hydrolysis of N(2)-succinylarginine into N(2)-succinylornithine, ammonia and CO(2).</text>
</comment>
<comment type="catalytic activity">
    <reaction evidence="1">
        <text>N(2)-succinyl-L-arginine + 2 H2O + 2 H(+) = N(2)-succinyl-L-ornithine + 2 NH4(+) + CO2</text>
        <dbReference type="Rhea" id="RHEA:19533"/>
        <dbReference type="ChEBI" id="CHEBI:15377"/>
        <dbReference type="ChEBI" id="CHEBI:15378"/>
        <dbReference type="ChEBI" id="CHEBI:16526"/>
        <dbReference type="ChEBI" id="CHEBI:28938"/>
        <dbReference type="ChEBI" id="CHEBI:58241"/>
        <dbReference type="ChEBI" id="CHEBI:58514"/>
        <dbReference type="EC" id="3.5.3.23"/>
    </reaction>
</comment>
<comment type="pathway">
    <text evidence="1">Amino-acid degradation; L-arginine degradation via AST pathway; L-glutamate and succinate from L-arginine: step 2/5.</text>
</comment>
<comment type="subunit">
    <text evidence="1">Homodimer.</text>
</comment>
<comment type="similarity">
    <text evidence="1">Belongs to the succinylarginine dihydrolase family.</text>
</comment>
<sequence length="447" mass="49865">MKGYEVNFDGLVGPTHHYAGLSFGNEASTKNRNNLSNPKLAAKQGLLKMKALADMGMKQGVLAPHERPHVPMLRRLGFTGDDISVVAQAMRYSPELLSSLSSASPMWTANAATVSPSADSQDERVHFTAANLNNKFHRSIEAETTSQVLQAIFKNERHFVHHEALPQVALFGDEGAANHNRLGGDYAKRGIQVFVYGQQHLNNGLPGPKRYPARQTREASEAIARLHRLDDAHTVFVQQNPDVIDQGVFHNDVIAVSNQQVLFHHQHAFLNQDQAFAEIRQKMASIGEDFISIEVPENRVTVDDAVATYLFNSQILTRPDGGMTIVVPEESRQNAAVWSYLNDMIQMGTPIDAIQVYDLRESMRNGGGPACLRLRVALNETELNAVNPKVLMNDQLFMTLNQWVDKHYRDRLAQEDLADPHLLMESRMALDELTKILGLGSVYPFQK</sequence>
<reference key="1">
    <citation type="journal article" date="2008" name="Antimicrob. Agents Chemother.">
        <title>Whole-genome pyrosequencing of an epidemic multidrug-resistant Acinetobacter baumannii strain belonging to the European clone II group.</title>
        <authorList>
            <person name="Iacono M."/>
            <person name="Villa L."/>
            <person name="Fortini D."/>
            <person name="Bordoni R."/>
            <person name="Imperi F."/>
            <person name="Bonnal R.J."/>
            <person name="Sicheritz-Ponten T."/>
            <person name="De Bellis G."/>
            <person name="Visca P."/>
            <person name="Cassone A."/>
            <person name="Carattoli A."/>
        </authorList>
    </citation>
    <scope>NUCLEOTIDE SEQUENCE [LARGE SCALE GENOMIC DNA]</scope>
    <source>
        <strain>ACICU</strain>
    </source>
</reference>
<dbReference type="EC" id="3.5.3.23" evidence="1"/>
<dbReference type="EMBL" id="CP000863">
    <property type="protein sequence ID" value="ACC58641.1"/>
    <property type="molecule type" value="Genomic_DNA"/>
</dbReference>
<dbReference type="RefSeq" id="WP_000679445.1">
    <property type="nucleotide sequence ID" value="NZ_CP031380.1"/>
</dbReference>
<dbReference type="SMR" id="B2HZS3"/>
<dbReference type="KEGG" id="abc:ACICU_03331"/>
<dbReference type="HOGENOM" id="CLU_053835_0_0_6"/>
<dbReference type="UniPathway" id="UPA00185">
    <property type="reaction ID" value="UER00280"/>
</dbReference>
<dbReference type="Proteomes" id="UP000008839">
    <property type="component" value="Chromosome"/>
</dbReference>
<dbReference type="GO" id="GO:0009015">
    <property type="term" value="F:N-succinylarginine dihydrolase activity"/>
    <property type="evidence" value="ECO:0007669"/>
    <property type="project" value="UniProtKB-UniRule"/>
</dbReference>
<dbReference type="GO" id="GO:0019544">
    <property type="term" value="P:arginine catabolic process to glutamate"/>
    <property type="evidence" value="ECO:0007669"/>
    <property type="project" value="UniProtKB-UniRule"/>
</dbReference>
<dbReference type="GO" id="GO:0019545">
    <property type="term" value="P:arginine catabolic process to succinate"/>
    <property type="evidence" value="ECO:0007669"/>
    <property type="project" value="UniProtKB-UniRule"/>
</dbReference>
<dbReference type="Gene3D" id="3.75.10.20">
    <property type="entry name" value="Succinylarginine dihydrolase"/>
    <property type="match status" value="1"/>
</dbReference>
<dbReference type="HAMAP" id="MF_01172">
    <property type="entry name" value="AstB"/>
    <property type="match status" value="1"/>
</dbReference>
<dbReference type="InterPro" id="IPR037031">
    <property type="entry name" value="AstB_sf"/>
</dbReference>
<dbReference type="InterPro" id="IPR007079">
    <property type="entry name" value="SuccinylArg_d-Hdrlase_AstB"/>
</dbReference>
<dbReference type="NCBIfam" id="TIGR03241">
    <property type="entry name" value="arg_catab_astB"/>
    <property type="match status" value="1"/>
</dbReference>
<dbReference type="NCBIfam" id="NF009789">
    <property type="entry name" value="PRK13281.1"/>
    <property type="match status" value="1"/>
</dbReference>
<dbReference type="PANTHER" id="PTHR30420">
    <property type="entry name" value="N-SUCCINYLARGININE DIHYDROLASE"/>
    <property type="match status" value="1"/>
</dbReference>
<dbReference type="PANTHER" id="PTHR30420:SF2">
    <property type="entry name" value="N-SUCCINYLARGININE DIHYDROLASE"/>
    <property type="match status" value="1"/>
</dbReference>
<dbReference type="Pfam" id="PF04996">
    <property type="entry name" value="AstB"/>
    <property type="match status" value="1"/>
</dbReference>
<dbReference type="SUPFAM" id="SSF55909">
    <property type="entry name" value="Pentein"/>
    <property type="match status" value="1"/>
</dbReference>
<organism>
    <name type="scientific">Acinetobacter baumannii (strain ACICU)</name>
    <dbReference type="NCBI Taxonomy" id="405416"/>
    <lineage>
        <taxon>Bacteria</taxon>
        <taxon>Pseudomonadati</taxon>
        <taxon>Pseudomonadota</taxon>
        <taxon>Gammaproteobacteria</taxon>
        <taxon>Moraxellales</taxon>
        <taxon>Moraxellaceae</taxon>
        <taxon>Acinetobacter</taxon>
        <taxon>Acinetobacter calcoaceticus/baumannii complex</taxon>
    </lineage>
</organism>
<proteinExistence type="inferred from homology"/>
<evidence type="ECO:0000255" key="1">
    <source>
        <dbReference type="HAMAP-Rule" id="MF_01172"/>
    </source>
</evidence>
<name>ASTB_ACIBC</name>
<keyword id="KW-0056">Arginine metabolism</keyword>
<keyword id="KW-0378">Hydrolase</keyword>